<comment type="function">
    <text evidence="1">Binds to actin and affects the structure of the cytoskeleton. At high concentrations, profilin prevents the polymerization of actin, whereas it enhances it at low concentrations (By similarity).</text>
</comment>
<comment type="subunit">
    <text evidence="1">Occurs in many kinds of cells as a complex with monomeric actin in a 1:1 ratio.</text>
</comment>
<comment type="subcellular location">
    <subcellularLocation>
        <location evidence="1">Cytoplasm</location>
        <location evidence="1">Cytoskeleton</location>
    </subcellularLocation>
</comment>
<comment type="PTM">
    <text evidence="1">Phosphorylated by MAP kinases.</text>
</comment>
<comment type="polymorphism">
    <text>Several isoforms of the allergen exist due to polymorphism.</text>
</comment>
<comment type="allergen">
    <text>Causes an allergic reaction in human.</text>
</comment>
<comment type="miscellaneous">
    <text evidence="3">The variability of the residues taking part of IgE-binding epitopes might be responsible of the difference in cross-reactivity among olive pollen cultivars, and between distantly related pollen species, leading to a variable range of allergy reactions among atopic patients.</text>
</comment>
<comment type="similarity">
    <text evidence="2">Belongs to the profilin family.</text>
</comment>
<evidence type="ECO:0000250" key="1"/>
<evidence type="ECO:0000305" key="2"/>
<evidence type="ECO:0000305" key="3">
    <source>
    </source>
</evidence>
<accession>A4KA50</accession>
<organism>
    <name type="scientific">Olea europaea</name>
    <name type="common">Common olive</name>
    <dbReference type="NCBI Taxonomy" id="4146"/>
    <lineage>
        <taxon>Eukaryota</taxon>
        <taxon>Viridiplantae</taxon>
        <taxon>Streptophyta</taxon>
        <taxon>Embryophyta</taxon>
        <taxon>Tracheophyta</taxon>
        <taxon>Spermatophyta</taxon>
        <taxon>Magnoliopsida</taxon>
        <taxon>eudicotyledons</taxon>
        <taxon>Gunneridae</taxon>
        <taxon>Pentapetalae</taxon>
        <taxon>asterids</taxon>
        <taxon>lamiids</taxon>
        <taxon>Lamiales</taxon>
        <taxon>Oleaceae</taxon>
        <taxon>Oleeae</taxon>
        <taxon>Olea</taxon>
    </lineage>
</organism>
<reference key="1">
    <citation type="journal article" date="2012" name="PLoS ONE">
        <title>Characterization of profilin polymorphism in pollen with a focus on multifunctionality.</title>
        <authorList>
            <person name="Jimenez-Lopez J.C."/>
            <person name="Morales S."/>
            <person name="Castro A.J."/>
            <person name="Volkmann D."/>
            <person name="Rodriguez-Garcia M.I."/>
            <person name="Alche Jde D."/>
        </authorList>
    </citation>
    <scope>NUCLEOTIDE SEQUENCE [MRNA]</scope>
    <scope>POLYMORPHISM</scope>
    <source>
        <strain>cv. Picual</strain>
    </source>
</reference>
<reference key="2">
    <citation type="journal article" date="2013" name="PLoS ONE">
        <title>Analysis of the effects of polymorphism on pollen profilin structural functionality and the generation of conformational, T- and B-cell epitopes.</title>
        <authorList>
            <person name="Jimenez-Lopez J.C."/>
            <person name="Rodriguez-Garcia M.I."/>
            <person name="Alche J.D."/>
        </authorList>
    </citation>
    <scope>3D-STRUCTURE MODELING</scope>
    <scope>DISULFIDE BOND</scope>
</reference>
<feature type="initiator methionine" description="Removed" evidence="1">
    <location>
        <position position="1"/>
    </location>
</feature>
<feature type="chain" id="PRO_0000425053" description="Profilin-5">
    <location>
        <begin position="2"/>
        <end position="131"/>
    </location>
</feature>
<feature type="short sequence motif" description="Involved in PIP2 interaction">
    <location>
        <begin position="81"/>
        <end position="97"/>
    </location>
</feature>
<feature type="modified residue" description="Phosphothreonine" evidence="1">
    <location>
        <position position="111"/>
    </location>
</feature>
<feature type="disulfide bond" evidence="3">
    <location>
        <begin position="13"/>
        <end position="115"/>
    </location>
</feature>
<name>PROCJ_OLEEU</name>
<proteinExistence type="evidence at protein level"/>
<protein>
    <recommendedName>
        <fullName>Profilin-5</fullName>
    </recommendedName>
    <alternativeName>
        <fullName>Pollen allergen Ole e 2</fullName>
    </alternativeName>
    <allergenName>Ole e 2</allergenName>
</protein>
<keyword id="KW-0009">Actin-binding</keyword>
<keyword id="KW-0020">Allergen</keyword>
<keyword id="KW-0963">Cytoplasm</keyword>
<keyword id="KW-0206">Cytoskeleton</keyword>
<keyword id="KW-1015">Disulfide bond</keyword>
<keyword id="KW-0597">Phosphoprotein</keyword>
<dbReference type="EMBL" id="DQ663554">
    <property type="protein sequence ID" value="ABG81307.1"/>
    <property type="molecule type" value="mRNA"/>
</dbReference>
<dbReference type="SMR" id="A4KA50"/>
<dbReference type="Allergome" id="490">
    <property type="allergen name" value="Ole e 2"/>
</dbReference>
<dbReference type="GO" id="GO:0005938">
    <property type="term" value="C:cell cortex"/>
    <property type="evidence" value="ECO:0007669"/>
    <property type="project" value="TreeGrafter"/>
</dbReference>
<dbReference type="GO" id="GO:0005856">
    <property type="term" value="C:cytoskeleton"/>
    <property type="evidence" value="ECO:0007669"/>
    <property type="project" value="UniProtKB-SubCell"/>
</dbReference>
<dbReference type="GO" id="GO:0003785">
    <property type="term" value="F:actin monomer binding"/>
    <property type="evidence" value="ECO:0007669"/>
    <property type="project" value="TreeGrafter"/>
</dbReference>
<dbReference type="CDD" id="cd00148">
    <property type="entry name" value="PROF"/>
    <property type="match status" value="1"/>
</dbReference>
<dbReference type="FunFam" id="3.30.450.30:FF:000001">
    <property type="entry name" value="Profilin"/>
    <property type="match status" value="1"/>
</dbReference>
<dbReference type="Gene3D" id="3.30.450.30">
    <property type="entry name" value="Dynein light chain 2a, cytoplasmic"/>
    <property type="match status" value="1"/>
</dbReference>
<dbReference type="InterPro" id="IPR048278">
    <property type="entry name" value="PFN"/>
</dbReference>
<dbReference type="InterPro" id="IPR005455">
    <property type="entry name" value="PFN_euk"/>
</dbReference>
<dbReference type="InterPro" id="IPR036140">
    <property type="entry name" value="PFN_sf"/>
</dbReference>
<dbReference type="InterPro" id="IPR027310">
    <property type="entry name" value="Profilin_CS"/>
</dbReference>
<dbReference type="PANTHER" id="PTHR11604">
    <property type="entry name" value="PROFILIN"/>
    <property type="match status" value="1"/>
</dbReference>
<dbReference type="PANTHER" id="PTHR11604:SF31">
    <property type="entry name" value="PROFILIN"/>
    <property type="match status" value="1"/>
</dbReference>
<dbReference type="Pfam" id="PF00235">
    <property type="entry name" value="Profilin"/>
    <property type="match status" value="1"/>
</dbReference>
<dbReference type="PRINTS" id="PR00392">
    <property type="entry name" value="PROFILIN"/>
</dbReference>
<dbReference type="PRINTS" id="PR01640">
    <property type="entry name" value="PROFILINPLNT"/>
</dbReference>
<dbReference type="SMART" id="SM00392">
    <property type="entry name" value="PROF"/>
    <property type="match status" value="1"/>
</dbReference>
<dbReference type="SUPFAM" id="SSF55770">
    <property type="entry name" value="Profilin (actin-binding protein)"/>
    <property type="match status" value="1"/>
</dbReference>
<dbReference type="PROSITE" id="PS00414">
    <property type="entry name" value="PROFILIN"/>
    <property type="match status" value="1"/>
</dbReference>
<sequence>MSWQAYVDEHLMCEIEGHHLASAAILGHDGTVWAQSADFPQFKPEEITGIMKDFDEPGHLAPTGMFVATAKYMVIQGEPGAVIRGKKGAGGITIKKTGQALVVGIYDEPMTPGQCNMVVERLGDYLMKQGM</sequence>